<sequence>MEVFVVPVLADEGFEGPTKEVFQTPHWFDVGIGSVNLYLNKATALTIFAALFVGVIFWLGFRRAKIIPRGIQNLCESAYDFVDLQIARGVIGEKGARYTPYLLVLFSFVLVSNVLAIIPAAQFPATSRIAVPMVLAVVTWVMFIYAGIKSNGAGAYFKEMIDPAPTAPLAIRLLLGPIEILSTLIVRPFTLAIRLFANMFAGHLLLLVFSLGADYLLPKPPFVFGVASLLVAIVLTAFELVIDALQAYIITILTAAYIGGAMAHGEHEVAPSEELAEHAPVGVPAAAHA</sequence>
<dbReference type="EMBL" id="CT573213">
    <property type="protein sequence ID" value="CAJ64562.1"/>
    <property type="molecule type" value="Genomic_DNA"/>
</dbReference>
<dbReference type="RefSeq" id="WP_011606996.1">
    <property type="nucleotide sequence ID" value="NC_008278.1"/>
</dbReference>
<dbReference type="SMR" id="Q0RDA8"/>
<dbReference type="STRING" id="326424.FRAAL5937"/>
<dbReference type="KEGG" id="fal:FRAAL5937"/>
<dbReference type="eggNOG" id="COG0356">
    <property type="taxonomic scope" value="Bacteria"/>
</dbReference>
<dbReference type="HOGENOM" id="CLU_041018_0_1_11"/>
<dbReference type="OrthoDB" id="9809130at2"/>
<dbReference type="Proteomes" id="UP000000657">
    <property type="component" value="Chromosome"/>
</dbReference>
<dbReference type="GO" id="GO:0005886">
    <property type="term" value="C:plasma membrane"/>
    <property type="evidence" value="ECO:0007669"/>
    <property type="project" value="UniProtKB-SubCell"/>
</dbReference>
<dbReference type="GO" id="GO:0045259">
    <property type="term" value="C:proton-transporting ATP synthase complex"/>
    <property type="evidence" value="ECO:0007669"/>
    <property type="project" value="UniProtKB-KW"/>
</dbReference>
<dbReference type="GO" id="GO:0046933">
    <property type="term" value="F:proton-transporting ATP synthase activity, rotational mechanism"/>
    <property type="evidence" value="ECO:0007669"/>
    <property type="project" value="UniProtKB-UniRule"/>
</dbReference>
<dbReference type="CDD" id="cd00310">
    <property type="entry name" value="ATP-synt_Fo_a_6"/>
    <property type="match status" value="1"/>
</dbReference>
<dbReference type="Gene3D" id="1.20.120.220">
    <property type="entry name" value="ATP synthase, F0 complex, subunit A"/>
    <property type="match status" value="1"/>
</dbReference>
<dbReference type="HAMAP" id="MF_01393">
    <property type="entry name" value="ATP_synth_a_bact"/>
    <property type="match status" value="1"/>
</dbReference>
<dbReference type="InterPro" id="IPR000568">
    <property type="entry name" value="ATP_synth_F0_asu"/>
</dbReference>
<dbReference type="InterPro" id="IPR023011">
    <property type="entry name" value="ATP_synth_F0_asu_AS"/>
</dbReference>
<dbReference type="InterPro" id="IPR045083">
    <property type="entry name" value="ATP_synth_F0_asu_bact/mt"/>
</dbReference>
<dbReference type="InterPro" id="IPR035908">
    <property type="entry name" value="F0_ATP_A_sf"/>
</dbReference>
<dbReference type="NCBIfam" id="TIGR01131">
    <property type="entry name" value="ATP_synt_6_or_A"/>
    <property type="match status" value="1"/>
</dbReference>
<dbReference type="PANTHER" id="PTHR11410">
    <property type="entry name" value="ATP SYNTHASE SUBUNIT A"/>
    <property type="match status" value="1"/>
</dbReference>
<dbReference type="PANTHER" id="PTHR11410:SF0">
    <property type="entry name" value="ATP SYNTHASE SUBUNIT A"/>
    <property type="match status" value="1"/>
</dbReference>
<dbReference type="Pfam" id="PF00119">
    <property type="entry name" value="ATP-synt_A"/>
    <property type="match status" value="1"/>
</dbReference>
<dbReference type="PRINTS" id="PR00123">
    <property type="entry name" value="ATPASEA"/>
</dbReference>
<dbReference type="SUPFAM" id="SSF81336">
    <property type="entry name" value="F1F0 ATP synthase subunit A"/>
    <property type="match status" value="1"/>
</dbReference>
<dbReference type="PROSITE" id="PS00449">
    <property type="entry name" value="ATPASE_A"/>
    <property type="match status" value="1"/>
</dbReference>
<organism>
    <name type="scientific">Frankia alni (strain DSM 45986 / CECT 9034 / ACN14a)</name>
    <dbReference type="NCBI Taxonomy" id="326424"/>
    <lineage>
        <taxon>Bacteria</taxon>
        <taxon>Bacillati</taxon>
        <taxon>Actinomycetota</taxon>
        <taxon>Actinomycetes</taxon>
        <taxon>Frankiales</taxon>
        <taxon>Frankiaceae</taxon>
        <taxon>Frankia</taxon>
    </lineage>
</organism>
<protein>
    <recommendedName>
        <fullName evidence="1">ATP synthase subunit a</fullName>
    </recommendedName>
    <alternativeName>
        <fullName evidence="1">ATP synthase F0 sector subunit a</fullName>
    </alternativeName>
    <alternativeName>
        <fullName evidence="1">F-ATPase subunit 6</fullName>
    </alternativeName>
</protein>
<keyword id="KW-0066">ATP synthesis</keyword>
<keyword id="KW-1003">Cell membrane</keyword>
<keyword id="KW-0138">CF(0)</keyword>
<keyword id="KW-0375">Hydrogen ion transport</keyword>
<keyword id="KW-0406">Ion transport</keyword>
<keyword id="KW-0472">Membrane</keyword>
<keyword id="KW-1185">Reference proteome</keyword>
<keyword id="KW-0812">Transmembrane</keyword>
<keyword id="KW-1133">Transmembrane helix</keyword>
<keyword id="KW-0813">Transport</keyword>
<gene>
    <name evidence="1" type="primary">atpB</name>
    <name type="ordered locus">FRAAL5937</name>
</gene>
<reference key="1">
    <citation type="journal article" date="2007" name="Genome Res.">
        <title>Genome characteristics of facultatively symbiotic Frankia sp. strains reflect host range and host plant biogeography.</title>
        <authorList>
            <person name="Normand P."/>
            <person name="Lapierre P."/>
            <person name="Tisa L.S."/>
            <person name="Gogarten J.P."/>
            <person name="Alloisio N."/>
            <person name="Bagnarol E."/>
            <person name="Bassi C.A."/>
            <person name="Berry A.M."/>
            <person name="Bickhart D.M."/>
            <person name="Choisne N."/>
            <person name="Couloux A."/>
            <person name="Cournoyer B."/>
            <person name="Cruveiller S."/>
            <person name="Daubin V."/>
            <person name="Demange N."/>
            <person name="Francino M.P."/>
            <person name="Goltsman E."/>
            <person name="Huang Y."/>
            <person name="Kopp O.R."/>
            <person name="Labarre L."/>
            <person name="Lapidus A."/>
            <person name="Lavire C."/>
            <person name="Marechal J."/>
            <person name="Martinez M."/>
            <person name="Mastronunzio J.E."/>
            <person name="Mullin B.C."/>
            <person name="Niemann J."/>
            <person name="Pujic P."/>
            <person name="Rawnsley T."/>
            <person name="Rouy Z."/>
            <person name="Schenowitz C."/>
            <person name="Sellstedt A."/>
            <person name="Tavares F."/>
            <person name="Tomkins J.P."/>
            <person name="Vallenet D."/>
            <person name="Valverde C."/>
            <person name="Wall L.G."/>
            <person name="Wang Y."/>
            <person name="Medigue C."/>
            <person name="Benson D.R."/>
        </authorList>
    </citation>
    <scope>NUCLEOTIDE SEQUENCE [LARGE SCALE GENOMIC DNA]</scope>
    <source>
        <strain>DSM 45986 / CECT 9034 / ACN14a</strain>
    </source>
</reference>
<accession>Q0RDA8</accession>
<evidence type="ECO:0000255" key="1">
    <source>
        <dbReference type="HAMAP-Rule" id="MF_01393"/>
    </source>
</evidence>
<feature type="chain" id="PRO_0000362308" description="ATP synthase subunit a">
    <location>
        <begin position="1"/>
        <end position="289"/>
    </location>
</feature>
<feature type="transmembrane region" description="Helical" evidence="1">
    <location>
        <begin position="41"/>
        <end position="61"/>
    </location>
</feature>
<feature type="transmembrane region" description="Helical" evidence="1">
    <location>
        <begin position="101"/>
        <end position="121"/>
    </location>
</feature>
<feature type="transmembrane region" description="Helical" evidence="1">
    <location>
        <begin position="129"/>
        <end position="149"/>
    </location>
</feature>
<feature type="transmembrane region" description="Helical" evidence="1">
    <location>
        <begin position="166"/>
        <end position="186"/>
    </location>
</feature>
<feature type="transmembrane region" description="Helical" evidence="1">
    <location>
        <begin position="189"/>
        <end position="209"/>
    </location>
</feature>
<feature type="transmembrane region" description="Helical" evidence="1">
    <location>
        <begin position="222"/>
        <end position="242"/>
    </location>
</feature>
<feature type="transmembrane region" description="Helical" evidence="1">
    <location>
        <begin position="244"/>
        <end position="264"/>
    </location>
</feature>
<name>ATP6_FRAAA</name>
<proteinExistence type="inferred from homology"/>
<comment type="function">
    <text evidence="1">Key component of the proton channel; it plays a direct role in the translocation of protons across the membrane.</text>
</comment>
<comment type="subunit">
    <text evidence="1">F-type ATPases have 2 components, CF(1) - the catalytic core - and CF(0) - the membrane proton channel. CF(1) has five subunits: alpha(3), beta(3), gamma(1), delta(1), epsilon(1). CF(0) has three main subunits: a(1), b(2) and c(9-12). The alpha and beta chains form an alternating ring which encloses part of the gamma chain. CF(1) is attached to CF(0) by a central stalk formed by the gamma and epsilon chains, while a peripheral stalk is formed by the delta and b chains.</text>
</comment>
<comment type="subcellular location">
    <subcellularLocation>
        <location evidence="1">Cell membrane</location>
        <topology evidence="1">Multi-pass membrane protein</topology>
    </subcellularLocation>
</comment>
<comment type="similarity">
    <text evidence="1">Belongs to the ATPase A chain family.</text>
</comment>